<reference key="1">
    <citation type="journal article" date="2004" name="Nat. Biotechnol.">
        <title>The genome sequence of the extreme thermophile Thermus thermophilus.</title>
        <authorList>
            <person name="Henne A."/>
            <person name="Brueggemann H."/>
            <person name="Raasch C."/>
            <person name="Wiezer A."/>
            <person name="Hartsch T."/>
            <person name="Liesegang H."/>
            <person name="Johann A."/>
            <person name="Lienard T."/>
            <person name="Gohl O."/>
            <person name="Martinez-Arias R."/>
            <person name="Jacobi C."/>
            <person name="Starkuviene V."/>
            <person name="Schlenczeck S."/>
            <person name="Dencker S."/>
            <person name="Huber R."/>
            <person name="Klenk H.-P."/>
            <person name="Kramer W."/>
            <person name="Merkl R."/>
            <person name="Gottschalk G."/>
            <person name="Fritz H.-J."/>
        </authorList>
    </citation>
    <scope>NUCLEOTIDE SEQUENCE [LARGE SCALE GENOMIC DNA]</scope>
    <source>
        <strain>ATCC BAA-163 / DSM 7039 / HB27</strain>
    </source>
</reference>
<keyword id="KW-0067">ATP-binding</keyword>
<keyword id="KW-0997">Cell inner membrane</keyword>
<keyword id="KW-1003">Cell membrane</keyword>
<keyword id="KW-0963">Cytoplasm</keyword>
<keyword id="KW-0472">Membrane</keyword>
<keyword id="KW-0547">Nucleotide-binding</keyword>
<keyword id="KW-0653">Protein transport</keyword>
<keyword id="KW-1278">Translocase</keyword>
<keyword id="KW-0811">Translocation</keyword>
<keyword id="KW-0813">Transport</keyword>
<organism>
    <name type="scientific">Thermus thermophilus (strain ATCC BAA-163 / DSM 7039 / HB27)</name>
    <dbReference type="NCBI Taxonomy" id="262724"/>
    <lineage>
        <taxon>Bacteria</taxon>
        <taxon>Thermotogati</taxon>
        <taxon>Deinococcota</taxon>
        <taxon>Deinococci</taxon>
        <taxon>Thermales</taxon>
        <taxon>Thermaceae</taxon>
        <taxon>Thermus</taxon>
    </lineage>
</organism>
<accession>Q72J92</accession>
<dbReference type="EC" id="7.4.2.8" evidence="1"/>
<dbReference type="EMBL" id="AE017221">
    <property type="protein sequence ID" value="AAS81231.1"/>
    <property type="molecule type" value="Genomic_DNA"/>
</dbReference>
<dbReference type="RefSeq" id="WP_011173314.1">
    <property type="nucleotide sequence ID" value="NC_005835.1"/>
</dbReference>
<dbReference type="SMR" id="Q72J92"/>
<dbReference type="KEGG" id="tth:TT_C0887"/>
<dbReference type="eggNOG" id="COG0653">
    <property type="taxonomic scope" value="Bacteria"/>
</dbReference>
<dbReference type="HOGENOM" id="CLU_005314_3_0_0"/>
<dbReference type="OrthoDB" id="9805579at2"/>
<dbReference type="Proteomes" id="UP000000592">
    <property type="component" value="Chromosome"/>
</dbReference>
<dbReference type="GO" id="GO:0031522">
    <property type="term" value="C:cell envelope Sec protein transport complex"/>
    <property type="evidence" value="ECO:0007669"/>
    <property type="project" value="TreeGrafter"/>
</dbReference>
<dbReference type="GO" id="GO:0005829">
    <property type="term" value="C:cytosol"/>
    <property type="evidence" value="ECO:0007669"/>
    <property type="project" value="TreeGrafter"/>
</dbReference>
<dbReference type="GO" id="GO:0005886">
    <property type="term" value="C:plasma membrane"/>
    <property type="evidence" value="ECO:0007669"/>
    <property type="project" value="UniProtKB-SubCell"/>
</dbReference>
<dbReference type="GO" id="GO:0005524">
    <property type="term" value="F:ATP binding"/>
    <property type="evidence" value="ECO:0007669"/>
    <property type="project" value="UniProtKB-UniRule"/>
</dbReference>
<dbReference type="GO" id="GO:0008564">
    <property type="term" value="F:protein-exporting ATPase activity"/>
    <property type="evidence" value="ECO:0007669"/>
    <property type="project" value="UniProtKB-EC"/>
</dbReference>
<dbReference type="GO" id="GO:0065002">
    <property type="term" value="P:intracellular protein transmembrane transport"/>
    <property type="evidence" value="ECO:0007669"/>
    <property type="project" value="UniProtKB-UniRule"/>
</dbReference>
<dbReference type="GO" id="GO:0017038">
    <property type="term" value="P:protein import"/>
    <property type="evidence" value="ECO:0007669"/>
    <property type="project" value="InterPro"/>
</dbReference>
<dbReference type="GO" id="GO:0006605">
    <property type="term" value="P:protein targeting"/>
    <property type="evidence" value="ECO:0007669"/>
    <property type="project" value="UniProtKB-UniRule"/>
</dbReference>
<dbReference type="GO" id="GO:0043952">
    <property type="term" value="P:protein transport by the Sec complex"/>
    <property type="evidence" value="ECO:0007669"/>
    <property type="project" value="TreeGrafter"/>
</dbReference>
<dbReference type="CDD" id="cd17928">
    <property type="entry name" value="DEXDc_SecA"/>
    <property type="match status" value="1"/>
</dbReference>
<dbReference type="CDD" id="cd18803">
    <property type="entry name" value="SF2_C_secA"/>
    <property type="match status" value="1"/>
</dbReference>
<dbReference type="FunFam" id="1.10.3060.10:FF:000003">
    <property type="entry name" value="Protein translocase subunit SecA"/>
    <property type="match status" value="1"/>
</dbReference>
<dbReference type="FunFam" id="3.40.50.300:FF:000334">
    <property type="entry name" value="Protein translocase subunit SecA"/>
    <property type="match status" value="1"/>
</dbReference>
<dbReference type="FunFam" id="3.90.1440.10:FF:000002">
    <property type="entry name" value="Protein translocase subunit SecA"/>
    <property type="match status" value="1"/>
</dbReference>
<dbReference type="Gene3D" id="1.10.3060.10">
    <property type="entry name" value="Helical scaffold and wing domains of SecA"/>
    <property type="match status" value="1"/>
</dbReference>
<dbReference type="Gene3D" id="3.40.50.300">
    <property type="entry name" value="P-loop containing nucleotide triphosphate hydrolases"/>
    <property type="match status" value="2"/>
</dbReference>
<dbReference type="Gene3D" id="3.90.1440.10">
    <property type="entry name" value="SecA, preprotein cross-linking domain"/>
    <property type="match status" value="1"/>
</dbReference>
<dbReference type="HAMAP" id="MF_01382">
    <property type="entry name" value="SecA"/>
    <property type="match status" value="1"/>
</dbReference>
<dbReference type="InterPro" id="IPR014001">
    <property type="entry name" value="Helicase_ATP-bd"/>
</dbReference>
<dbReference type="InterPro" id="IPR027417">
    <property type="entry name" value="P-loop_NTPase"/>
</dbReference>
<dbReference type="InterPro" id="IPR000185">
    <property type="entry name" value="SecA"/>
</dbReference>
<dbReference type="InterPro" id="IPR020937">
    <property type="entry name" value="SecA_CS"/>
</dbReference>
<dbReference type="InterPro" id="IPR011115">
    <property type="entry name" value="SecA_DEAD"/>
</dbReference>
<dbReference type="InterPro" id="IPR014018">
    <property type="entry name" value="SecA_motor_DEAD"/>
</dbReference>
<dbReference type="InterPro" id="IPR011130">
    <property type="entry name" value="SecA_preprotein_X-link_dom"/>
</dbReference>
<dbReference type="InterPro" id="IPR044722">
    <property type="entry name" value="SecA_SF2_C"/>
</dbReference>
<dbReference type="InterPro" id="IPR011116">
    <property type="entry name" value="SecA_Wing/Scaffold"/>
</dbReference>
<dbReference type="InterPro" id="IPR036266">
    <property type="entry name" value="SecA_Wing/Scaffold_sf"/>
</dbReference>
<dbReference type="InterPro" id="IPR036670">
    <property type="entry name" value="SecA_X-link_sf"/>
</dbReference>
<dbReference type="NCBIfam" id="TIGR00963">
    <property type="entry name" value="secA"/>
    <property type="match status" value="1"/>
</dbReference>
<dbReference type="PANTHER" id="PTHR30612:SF0">
    <property type="entry name" value="CHLOROPLAST PROTEIN-TRANSPORTING ATPASE"/>
    <property type="match status" value="1"/>
</dbReference>
<dbReference type="PANTHER" id="PTHR30612">
    <property type="entry name" value="SECA INNER MEMBRANE COMPONENT OF SEC PROTEIN SECRETION SYSTEM"/>
    <property type="match status" value="1"/>
</dbReference>
<dbReference type="Pfam" id="PF21090">
    <property type="entry name" value="P-loop_SecA"/>
    <property type="match status" value="1"/>
</dbReference>
<dbReference type="Pfam" id="PF07517">
    <property type="entry name" value="SecA_DEAD"/>
    <property type="match status" value="1"/>
</dbReference>
<dbReference type="Pfam" id="PF01043">
    <property type="entry name" value="SecA_PP_bind"/>
    <property type="match status" value="1"/>
</dbReference>
<dbReference type="Pfam" id="PF07516">
    <property type="entry name" value="SecA_SW"/>
    <property type="match status" value="1"/>
</dbReference>
<dbReference type="PRINTS" id="PR00906">
    <property type="entry name" value="SECA"/>
</dbReference>
<dbReference type="SMART" id="SM00957">
    <property type="entry name" value="SecA_DEAD"/>
    <property type="match status" value="1"/>
</dbReference>
<dbReference type="SMART" id="SM00958">
    <property type="entry name" value="SecA_PP_bind"/>
    <property type="match status" value="1"/>
</dbReference>
<dbReference type="SUPFAM" id="SSF81886">
    <property type="entry name" value="Helical scaffold and wing domains of SecA"/>
    <property type="match status" value="1"/>
</dbReference>
<dbReference type="SUPFAM" id="SSF52540">
    <property type="entry name" value="P-loop containing nucleoside triphosphate hydrolases"/>
    <property type="match status" value="2"/>
</dbReference>
<dbReference type="SUPFAM" id="SSF81767">
    <property type="entry name" value="Pre-protein crosslinking domain of SecA"/>
    <property type="match status" value="1"/>
</dbReference>
<dbReference type="PROSITE" id="PS01312">
    <property type="entry name" value="SECA"/>
    <property type="match status" value="1"/>
</dbReference>
<dbReference type="PROSITE" id="PS51196">
    <property type="entry name" value="SECA_MOTOR_DEAD"/>
    <property type="match status" value="1"/>
</dbReference>
<comment type="function">
    <text evidence="1">Part of the Sec protein translocase complex. Interacts with the SecYEG preprotein conducting channel. Has a central role in coupling the hydrolysis of ATP to the transfer of proteins into and across the cell membrane, serving as an ATP-driven molecular motor driving the stepwise translocation of polypeptide chains across the membrane.</text>
</comment>
<comment type="catalytic activity">
    <reaction evidence="1">
        <text>ATP + H2O + cellular proteinSide 1 = ADP + phosphate + cellular proteinSide 2.</text>
        <dbReference type="EC" id="7.4.2.8"/>
    </reaction>
</comment>
<comment type="subunit">
    <text evidence="1">Monomer and homodimer. Part of the essential Sec protein translocation apparatus which comprises SecA, SecYEG and auxiliary proteins SecDF. Other proteins may also be involved.</text>
</comment>
<comment type="subcellular location">
    <subcellularLocation>
        <location evidence="1">Cell inner membrane</location>
        <topology evidence="1">Peripheral membrane protein</topology>
        <orientation evidence="1">Cytoplasmic side</orientation>
    </subcellularLocation>
    <subcellularLocation>
        <location evidence="1">Cytoplasm</location>
    </subcellularLocation>
    <text evidence="1">Distribution is 50-50.</text>
</comment>
<comment type="similarity">
    <text evidence="1">Belongs to the SecA family.</text>
</comment>
<sequence>MLGLLRRLFDNNEREIARYYKQVVEPVNRLEAEVEKLPDLAAAYRELKEKHEKGASLDELLPMAFALTRESAKRYLGMRHFDVQLIGGAVLHEGKIAEMKTGEGKTLVATLAVALNALTGKGVHVVTVNDYLARRDAEWMGPVYRGLGLSVGVIQHASTPAERRKAYLADVTYVTNSELGFDYLRDNMAISPDQLVLRHDHPLHYAIIDEVDSILIDEARTPLIISGPAEKATDLYYKMAEIAKKLERGLPAEPGVRKEPTGDYTVEEKNRSVHLTLQGIAKAEKLLGIEGLFSPENMELAHMLIQAIRAKELYHRDRDYIVQDGQVIIVDEFTGRLMPGRRYGEGLHQAIEAKEGVRIERENQTLATITYQNFFRLYEKRAGMTGTAKTEEKEFQEIYGMDVVVVPTNRPVVRKDFPDVVYRTEKGKFYAVVEEIAEKYERGQPVLVGTISIEKSERLSQMLKEPRLYLPRLEMRLELFKKASQKQQGPEWERLRKLLERPAQLKDEDLAPFEGLIPPKGNLRTAWEGLKRAVHTLAVLRQGIPHQVLNAKHHAREAEIVAQAGRSKTVTIATNMAGRGTDIKLGGNPEYLAAALLEKEGFDRYEWKVELFIKKMVAGKEEEARALAQELGIREELLERIREIREECKQDEERVRALGGLFIIGTERHESRRIDNQLRGRAGRQGDPGGSRFYVSFDDDLMRLFASDRVIAMLDRMGFDDSEPIEHPMVTRSIERAQKRVEDRNFAIRKQLLQFDDVLSRQREVIYAQRRLILLGKDEEVKEAAIGMVEETVASLAENFLNPEVHPEDWDLEGLKATLLDTAPQLQDFPFAELRALKAEEAVERLVEAALKAYEAREAELSPPLMRAVERFVILNVVDNAWKEHLHNLDVLRQGIFLRGYGQKDPFQEYKIEATRLFNEMVAFIKSEVAKFLFRLKVEAEPVRPVREAPYVPVPEAKPEPSEVFGVERKRATPPPQPGLSRAERRRLMRQEKKRKK</sequence>
<protein>
    <recommendedName>
        <fullName evidence="1">Protein translocase subunit SecA</fullName>
        <ecNumber evidence="1">7.4.2.8</ecNumber>
    </recommendedName>
</protein>
<name>SECA_THET2</name>
<evidence type="ECO:0000255" key="1">
    <source>
        <dbReference type="HAMAP-Rule" id="MF_01382"/>
    </source>
</evidence>
<evidence type="ECO:0000256" key="2">
    <source>
        <dbReference type="SAM" id="MobiDB-lite"/>
    </source>
</evidence>
<gene>
    <name evidence="1" type="primary">secA</name>
    <name type="ordered locus">TT_C0887</name>
</gene>
<feature type="chain" id="PRO_0000321025" description="Protein translocase subunit SecA">
    <location>
        <begin position="1"/>
        <end position="997"/>
    </location>
</feature>
<feature type="region of interest" description="Disordered" evidence="2">
    <location>
        <begin position="950"/>
        <end position="997"/>
    </location>
</feature>
<feature type="compositionally biased region" description="Basic and acidic residues" evidence="2">
    <location>
        <begin position="957"/>
        <end position="971"/>
    </location>
</feature>
<feature type="compositionally biased region" description="Basic residues" evidence="2">
    <location>
        <begin position="984"/>
        <end position="997"/>
    </location>
</feature>
<feature type="binding site" evidence="1">
    <location>
        <position position="84"/>
    </location>
    <ligand>
        <name>ATP</name>
        <dbReference type="ChEBI" id="CHEBI:30616"/>
    </ligand>
</feature>
<feature type="binding site" evidence="1">
    <location>
        <begin position="102"/>
        <end position="106"/>
    </location>
    <ligand>
        <name>ATP</name>
        <dbReference type="ChEBI" id="CHEBI:30616"/>
    </ligand>
</feature>
<feature type="binding site" evidence="1">
    <location>
        <position position="582"/>
    </location>
    <ligand>
        <name>ATP</name>
        <dbReference type="ChEBI" id="CHEBI:30616"/>
    </ligand>
</feature>
<proteinExistence type="inferred from homology"/>